<proteinExistence type="evidence at protein level"/>
<sequence length="1430" mass="159052">MRLTNEKATMQPQLSDLALVLGLLICCLPTLTWAATLSDKRLCADPKCEQIISMGIAKITYAIGGEGLISFKINSPIRVLSKSAGSNMQLWGVDINGRRGYANKDFIMEKKILVRDKDLLYEVPVVGPGSPVQSVETPVQSVETTVQPVLNASESTDDLATTTTSPLEIAVDSIVVEHDKLQDQQVPDPTAASKAQVQVIEGTELPLEAIAATTEGSIVPETAADPQEATNLDSTVVDTKEPQALNSEAIKLQEEPKAQQPATEAEKPPPLPQAINAELEDADDFDYGDDETDDDSQQGSQDNESIVEIANDNKSINESIELKPLSVAQLKKTDKVEDSKDETKEKHAEMEVSKQEDSSLPTETLNVTALEEQIDQKEFPKQVLDAAVELKSSDPLPVEEVTETVAEPPRTIVEDKINEEIVPVSAKIQAKPATVNPTEPIVAQSDAEIKAPSESVISSTTPAPVVEEAPQKADPVGLPPLFEKKNFENPNNYYKQLQEEQEKQRLVAEAEEQKRLQEEADQQKRLQEEAALNKRLLEEAEQQKRLQEEAEQQKRLQEEAELNKRLLEEAEKQKRLHEESEQLQRSSEEAEPQLSVQEANMQQLNDSVDSQSNEIVDNNNRQQPEQYQQHHHHTESAFNHPSTASHTTPTPDAESPYAAVQEETTEASQTDNHREGVGYVEPVALPATASPVSEVPIKEDAAGFGLFATIVDTVNNFIGKDPQSDPADSSDELHRILYPGRPEVPPSQRKAEDFAPADVDGYCARFQAKDEHCHRSISLDNFVEVMADKLVDHSQLLLCVVIAAISSLFFMFAYYCFCNSSQEGALLSKLNHLERSLLASHKENLIIKHDLMTTRTKLASIEDNSFGSNDMVADLKKQLESELYEKAKLQEQVGSLERDLDNAAEAGLELNKMLSEVLNGQNGDEAFMSTVDELQRQLNDQEKIIIEINNSLAEKSRENSELQYTFTEATTRLNSELKTLQEDNYELEMEKSKLQTRLQEIQAETESELAKALEARNYEMQKLQNQIVELTVKWEREHGDLQTSLAKIEALEDCLKAVGKDAIHNVQELITSAKTRGELNAVHKKLVELQSKVEQEEAHKQRLESQLQQSSQDVEQLKQDFNQSERDKLEAQTRLEVLSGYFREKENDLKKELSLQETKWLQHQGENASTVETQTLMKNEIQTLKSQNDELRAEIEAQIASHKAQMGTLENRAHESWLAARQSERRCEEALAEAASLRRKLTTMASGGGGVGGDPGVMEAIAANGTSVLGAELKTAPSPLPLPGSPLLNMPNPLPFLAAPFSPFMGLPPPFLPPTGAGGARPPPLGRMRSPPPSSRGDRDRERYSDYSDYDDYDDDEEDDRGMDRRRRHSGSWGRRHRGSYSHSPRTYRSLSPSDSRYNYNDTETDFSPPPSPPPVPSGRSATSRPYSEV</sequence>
<feature type="signal peptide" evidence="1">
    <location>
        <begin position="1"/>
        <end position="34"/>
    </location>
</feature>
<feature type="chain" id="PRO_0000370510" description="Transport and Golgi organization protein 1">
    <location>
        <begin position="35"/>
        <end position="1430"/>
    </location>
</feature>
<feature type="topological domain" description="Extracellular" evidence="1">
    <location>
        <begin position="35"/>
        <end position="796"/>
    </location>
</feature>
<feature type="transmembrane region" description="Helical" evidence="1">
    <location>
        <begin position="797"/>
        <end position="817"/>
    </location>
</feature>
<feature type="topological domain" description="Cytoplasmic" evidence="1">
    <location>
        <begin position="818"/>
        <end position="1430"/>
    </location>
</feature>
<feature type="domain" description="SH3" evidence="2">
    <location>
        <begin position="50"/>
        <end position="112"/>
    </location>
</feature>
<feature type="region of interest" description="Disordered" evidence="3">
    <location>
        <begin position="253"/>
        <end position="272"/>
    </location>
</feature>
<feature type="region of interest" description="Disordered" evidence="3">
    <location>
        <begin position="284"/>
        <end position="303"/>
    </location>
</feature>
<feature type="region of interest" description="Disordered" evidence="3">
    <location>
        <begin position="318"/>
        <end position="362"/>
    </location>
</feature>
<feature type="region of interest" description="Disordered" evidence="3">
    <location>
        <begin position="445"/>
        <end position="524"/>
    </location>
</feature>
<feature type="region of interest" description="Disordered" evidence="3">
    <location>
        <begin position="568"/>
        <end position="673"/>
    </location>
</feature>
<feature type="region of interest" description="Disordered" evidence="3">
    <location>
        <begin position="1105"/>
        <end position="1126"/>
    </location>
</feature>
<feature type="region of interest" description="Disordered" evidence="3">
    <location>
        <begin position="1312"/>
        <end position="1430"/>
    </location>
</feature>
<feature type="coiled-coil region" evidence="1">
    <location>
        <begin position="494"/>
        <end position="620"/>
    </location>
</feature>
<feature type="coiled-coil region" evidence="1">
    <location>
        <begin position="869"/>
        <end position="1245"/>
    </location>
</feature>
<feature type="compositionally biased region" description="Acidic residues" evidence="3">
    <location>
        <begin position="284"/>
        <end position="296"/>
    </location>
</feature>
<feature type="compositionally biased region" description="Basic and acidic residues" evidence="3">
    <location>
        <begin position="331"/>
        <end position="357"/>
    </location>
</feature>
<feature type="compositionally biased region" description="Basic and acidic residues" evidence="3">
    <location>
        <begin position="497"/>
        <end position="524"/>
    </location>
</feature>
<feature type="compositionally biased region" description="Basic and acidic residues" evidence="3">
    <location>
        <begin position="568"/>
        <end position="588"/>
    </location>
</feature>
<feature type="compositionally biased region" description="Polar residues" evidence="3">
    <location>
        <begin position="594"/>
        <end position="621"/>
    </location>
</feature>
<feature type="compositionally biased region" description="Low complexity" evidence="3">
    <location>
        <begin position="640"/>
        <end position="651"/>
    </location>
</feature>
<feature type="compositionally biased region" description="Low complexity" evidence="3">
    <location>
        <begin position="1105"/>
        <end position="1114"/>
    </location>
</feature>
<feature type="compositionally biased region" description="Basic and acidic residues" evidence="3">
    <location>
        <begin position="1115"/>
        <end position="1126"/>
    </location>
</feature>
<feature type="compositionally biased region" description="Pro residues" evidence="3">
    <location>
        <begin position="1321"/>
        <end position="1334"/>
    </location>
</feature>
<feature type="compositionally biased region" description="Basic and acidic residues" evidence="3">
    <location>
        <begin position="1336"/>
        <end position="1346"/>
    </location>
</feature>
<feature type="compositionally biased region" description="Acidic residues" evidence="3">
    <location>
        <begin position="1348"/>
        <end position="1361"/>
    </location>
</feature>
<feature type="compositionally biased region" description="Basic residues" evidence="3">
    <location>
        <begin position="1364"/>
        <end position="1380"/>
    </location>
</feature>
<feature type="compositionally biased region" description="Polar residues" evidence="3">
    <location>
        <begin position="1387"/>
        <end position="1402"/>
    </location>
</feature>
<feature type="compositionally biased region" description="Pro residues" evidence="3">
    <location>
        <begin position="1408"/>
        <end position="1417"/>
    </location>
</feature>
<feature type="compositionally biased region" description="Polar residues" evidence="3">
    <location>
        <begin position="1420"/>
        <end position="1430"/>
    </location>
</feature>
<feature type="modified residue" description="Phosphoserine" evidence="5">
    <location>
        <position position="865"/>
    </location>
</feature>
<feature type="modified residue" description="Phosphoserine" evidence="5">
    <location>
        <position position="868"/>
    </location>
</feature>
<feature type="modified residue" description="Phosphoserine" evidence="5">
    <location>
        <position position="1345"/>
    </location>
</feature>
<feature type="modified residue" description="Phosphoserine" evidence="5">
    <location>
        <position position="1348"/>
    </location>
</feature>
<feature type="modified residue" description="Phosphoserine" evidence="5">
    <location>
        <position position="1390"/>
    </location>
</feature>
<feature type="modified residue" description="Phosphoserine" evidence="5">
    <location>
        <position position="1392"/>
    </location>
</feature>
<dbReference type="EMBL" id="AE014134">
    <property type="protein sequence ID" value="AAF52414.2"/>
    <property type="molecule type" value="Genomic_DNA"/>
</dbReference>
<dbReference type="EMBL" id="AE014134">
    <property type="protein sequence ID" value="AAF52413.3"/>
    <property type="molecule type" value="Genomic_DNA"/>
</dbReference>
<dbReference type="EMBL" id="BT003314">
    <property type="protein sequence ID" value="AAO25074.1"/>
    <property type="molecule type" value="mRNA"/>
</dbReference>
<dbReference type="EMBL" id="AY075391">
    <property type="protein sequence ID" value="AAL68225.1"/>
    <property type="status" value="ALT_SEQ"/>
    <property type="molecule type" value="mRNA"/>
</dbReference>
<dbReference type="RefSeq" id="NP_609058.2">
    <property type="nucleotide sequence ID" value="NM_135214.4"/>
</dbReference>
<dbReference type="RefSeq" id="NP_723198.2">
    <property type="nucleotide sequence ID" value="NM_164697.3"/>
</dbReference>
<dbReference type="SMR" id="Q9VMA7"/>
<dbReference type="BioGRID" id="60084">
    <property type="interactions" value="7"/>
</dbReference>
<dbReference type="FunCoup" id="Q9VMA7">
    <property type="interactions" value="357"/>
</dbReference>
<dbReference type="IntAct" id="Q9VMA7">
    <property type="interactions" value="1"/>
</dbReference>
<dbReference type="STRING" id="7227.FBpp0078925"/>
<dbReference type="TCDB" id="9.B.113.1.3">
    <property type="family name" value="the collagen secretory protein, mia3 (mia3) family"/>
</dbReference>
<dbReference type="GlyGen" id="Q9VMA7">
    <property type="glycosylation" value="1 site"/>
</dbReference>
<dbReference type="iPTMnet" id="Q9VMA7"/>
<dbReference type="PaxDb" id="7227-FBpp0078925"/>
<dbReference type="EnsemblMetazoa" id="FBtr0079295">
    <property type="protein sequence ID" value="FBpp0078925"/>
    <property type="gene ID" value="FBgn0286898"/>
</dbReference>
<dbReference type="EnsemblMetazoa" id="FBtr0303224">
    <property type="protein sequence ID" value="FBpp0292316"/>
    <property type="gene ID" value="FBgn0286898"/>
</dbReference>
<dbReference type="GeneID" id="33930"/>
<dbReference type="KEGG" id="dme:Dmel_CG11098"/>
<dbReference type="UCSC" id="CG11098-RA">
    <property type="organism name" value="d. melanogaster"/>
</dbReference>
<dbReference type="UCSC" id="CG11098-RB">
    <property type="organism name" value="d. melanogaster"/>
</dbReference>
<dbReference type="AGR" id="FB:FBgn0286898"/>
<dbReference type="CTD" id="33930"/>
<dbReference type="FlyBase" id="FBgn0286898">
    <property type="gene designation" value="Tango1"/>
</dbReference>
<dbReference type="VEuPathDB" id="VectorBase:FBgn0286898"/>
<dbReference type="eggNOG" id="ENOG502QU27">
    <property type="taxonomic scope" value="Eukaryota"/>
</dbReference>
<dbReference type="GeneTree" id="ENSGT00950000182767"/>
<dbReference type="HOGENOM" id="CLU_005232_0_0_1"/>
<dbReference type="InParanoid" id="Q9VMA7"/>
<dbReference type="OMA" id="PNEYYKQ"/>
<dbReference type="OrthoDB" id="6627676at2759"/>
<dbReference type="PhylomeDB" id="Q9VMA7"/>
<dbReference type="Reactome" id="R-DME-381426">
    <property type="pathway name" value="Regulation of Insulin-like Growth Factor (IGF) transport and uptake by Insulin-like Growth Factor Binding Proteins (IGFBPs)"/>
</dbReference>
<dbReference type="Reactome" id="R-DME-5694530">
    <property type="pathway name" value="Cargo concentration in the ER"/>
</dbReference>
<dbReference type="Reactome" id="R-DME-8957275">
    <property type="pathway name" value="Post-translational protein phosphorylation"/>
</dbReference>
<dbReference type="BioGRID-ORCS" id="33930">
    <property type="hits" value="0 hits in 3 CRISPR screens"/>
</dbReference>
<dbReference type="GenomeRNAi" id="33930"/>
<dbReference type="PRO" id="PR:Q9VMA7"/>
<dbReference type="Proteomes" id="UP000000803">
    <property type="component" value="Chromosome 2L"/>
</dbReference>
<dbReference type="Bgee" id="FBgn0286898">
    <property type="expression patterns" value="Expressed in adult midgut enterocyte in digestive tract and 222 other cell types or tissues"/>
</dbReference>
<dbReference type="ExpressionAtlas" id="Q9VMA7">
    <property type="expression patterns" value="baseline and differential"/>
</dbReference>
<dbReference type="GO" id="GO:0012505">
    <property type="term" value="C:endomembrane system"/>
    <property type="evidence" value="ECO:0007005"/>
    <property type="project" value="FlyBase"/>
</dbReference>
<dbReference type="GO" id="GO:0070971">
    <property type="term" value="C:endoplasmic reticulum exit site"/>
    <property type="evidence" value="ECO:0000314"/>
    <property type="project" value="FlyBase"/>
</dbReference>
<dbReference type="GO" id="GO:0005789">
    <property type="term" value="C:endoplasmic reticulum membrane"/>
    <property type="evidence" value="ECO:0000318"/>
    <property type="project" value="GO_Central"/>
</dbReference>
<dbReference type="GO" id="GO:0005794">
    <property type="term" value="C:Golgi apparatus"/>
    <property type="evidence" value="ECO:0000314"/>
    <property type="project" value="FlyBase"/>
</dbReference>
<dbReference type="GO" id="GO:0000137">
    <property type="term" value="C:Golgi cis cisterna"/>
    <property type="evidence" value="ECO:0000314"/>
    <property type="project" value="FlyBase"/>
</dbReference>
<dbReference type="GO" id="GO:0000139">
    <property type="term" value="C:Golgi membrane"/>
    <property type="evidence" value="ECO:0007669"/>
    <property type="project" value="UniProtKB-SubCell"/>
</dbReference>
<dbReference type="GO" id="GO:0006888">
    <property type="term" value="P:endoplasmic reticulum to Golgi vesicle-mediated transport"/>
    <property type="evidence" value="ECO:0000318"/>
    <property type="project" value="GO_Central"/>
</dbReference>
<dbReference type="GO" id="GO:0006887">
    <property type="term" value="P:exocytosis"/>
    <property type="evidence" value="ECO:0007669"/>
    <property type="project" value="UniProtKB-KW"/>
</dbReference>
<dbReference type="GO" id="GO:0007030">
    <property type="term" value="P:Golgi organization"/>
    <property type="evidence" value="ECO:0000315"/>
    <property type="project" value="FlyBase"/>
</dbReference>
<dbReference type="GO" id="GO:0051047">
    <property type="term" value="P:positive regulation of secretion"/>
    <property type="evidence" value="ECO:0000315"/>
    <property type="project" value="FlyBase"/>
</dbReference>
<dbReference type="GO" id="GO:0009306">
    <property type="term" value="P:protein secretion"/>
    <property type="evidence" value="ECO:0000315"/>
    <property type="project" value="UniProtKB"/>
</dbReference>
<dbReference type="GO" id="GO:0033363">
    <property type="term" value="P:secretory granule organization"/>
    <property type="evidence" value="ECO:0000315"/>
    <property type="project" value="FlyBase"/>
</dbReference>
<dbReference type="GO" id="GO:0035459">
    <property type="term" value="P:vesicle cargo loading"/>
    <property type="evidence" value="ECO:0000318"/>
    <property type="project" value="GO_Central"/>
</dbReference>
<dbReference type="FunFam" id="2.30.30.40:FF:000338">
    <property type="entry name" value="Transport and Golgi organization protein 1"/>
    <property type="match status" value="1"/>
</dbReference>
<dbReference type="Gene3D" id="2.30.30.40">
    <property type="entry name" value="SH3 Domains"/>
    <property type="match status" value="1"/>
</dbReference>
<dbReference type="InterPro" id="IPR051500">
    <property type="entry name" value="cTAGE_MIA/OTOR"/>
</dbReference>
<dbReference type="InterPro" id="IPR001452">
    <property type="entry name" value="SH3_domain"/>
</dbReference>
<dbReference type="PANTHER" id="PTHR23158">
    <property type="entry name" value="MELANOMA INHIBITORY ACTIVITY-RELATED"/>
    <property type="match status" value="1"/>
</dbReference>
<dbReference type="PANTHER" id="PTHR23158:SF33">
    <property type="entry name" value="TRANSPORT AND GOLGI ORGANIZATION PROTEIN 1"/>
    <property type="match status" value="1"/>
</dbReference>
<dbReference type="PROSITE" id="PS50002">
    <property type="entry name" value="SH3"/>
    <property type="match status" value="1"/>
</dbReference>
<keyword id="KW-0175">Coiled coil</keyword>
<keyword id="KW-0931">ER-Golgi transport</keyword>
<keyword id="KW-0268">Exocytosis</keyword>
<keyword id="KW-0333">Golgi apparatus</keyword>
<keyword id="KW-0472">Membrane</keyword>
<keyword id="KW-0597">Phosphoprotein</keyword>
<keyword id="KW-0653">Protein transport</keyword>
<keyword id="KW-1185">Reference proteome</keyword>
<keyword id="KW-0728">SH3 domain</keyword>
<keyword id="KW-0732">Signal</keyword>
<keyword id="KW-0812">Transmembrane</keyword>
<keyword id="KW-1133">Transmembrane helix</keyword>
<keyword id="KW-0813">Transport</keyword>
<evidence type="ECO:0000255" key="1"/>
<evidence type="ECO:0000255" key="2">
    <source>
        <dbReference type="PROSITE-ProRule" id="PRU00192"/>
    </source>
</evidence>
<evidence type="ECO:0000256" key="3">
    <source>
        <dbReference type="SAM" id="MobiDB-lite"/>
    </source>
</evidence>
<evidence type="ECO:0000269" key="4">
    <source>
    </source>
</evidence>
<evidence type="ECO:0000269" key="5">
    <source>
    </source>
</evidence>
<evidence type="ECO:0000269" key="6">
    <source>
    </source>
</evidence>
<evidence type="ECO:0000303" key="7">
    <source>
    </source>
</evidence>
<evidence type="ECO:0000305" key="8"/>
<evidence type="ECO:0000312" key="9">
    <source>
        <dbReference type="FlyBase" id="FBgn0286898"/>
    </source>
</evidence>
<reference key="1">
    <citation type="journal article" date="2000" name="Science">
        <title>The genome sequence of Drosophila melanogaster.</title>
        <authorList>
            <person name="Adams M.D."/>
            <person name="Celniker S.E."/>
            <person name="Holt R.A."/>
            <person name="Evans C.A."/>
            <person name="Gocayne J.D."/>
            <person name="Amanatides P.G."/>
            <person name="Scherer S.E."/>
            <person name="Li P.W."/>
            <person name="Hoskins R.A."/>
            <person name="Galle R.F."/>
            <person name="George R.A."/>
            <person name="Lewis S.E."/>
            <person name="Richards S."/>
            <person name="Ashburner M."/>
            <person name="Henderson S.N."/>
            <person name="Sutton G.G."/>
            <person name="Wortman J.R."/>
            <person name="Yandell M.D."/>
            <person name="Zhang Q."/>
            <person name="Chen L.X."/>
            <person name="Brandon R.C."/>
            <person name="Rogers Y.-H.C."/>
            <person name="Blazej R.G."/>
            <person name="Champe M."/>
            <person name="Pfeiffer B.D."/>
            <person name="Wan K.H."/>
            <person name="Doyle C."/>
            <person name="Baxter E.G."/>
            <person name="Helt G."/>
            <person name="Nelson C.R."/>
            <person name="Miklos G.L.G."/>
            <person name="Abril J.F."/>
            <person name="Agbayani A."/>
            <person name="An H.-J."/>
            <person name="Andrews-Pfannkoch C."/>
            <person name="Baldwin D."/>
            <person name="Ballew R.M."/>
            <person name="Basu A."/>
            <person name="Baxendale J."/>
            <person name="Bayraktaroglu L."/>
            <person name="Beasley E.M."/>
            <person name="Beeson K.Y."/>
            <person name="Benos P.V."/>
            <person name="Berman B.P."/>
            <person name="Bhandari D."/>
            <person name="Bolshakov S."/>
            <person name="Borkova D."/>
            <person name="Botchan M.R."/>
            <person name="Bouck J."/>
            <person name="Brokstein P."/>
            <person name="Brottier P."/>
            <person name="Burtis K.C."/>
            <person name="Busam D.A."/>
            <person name="Butler H."/>
            <person name="Cadieu E."/>
            <person name="Center A."/>
            <person name="Chandra I."/>
            <person name="Cherry J.M."/>
            <person name="Cawley S."/>
            <person name="Dahlke C."/>
            <person name="Davenport L.B."/>
            <person name="Davies P."/>
            <person name="de Pablos B."/>
            <person name="Delcher A."/>
            <person name="Deng Z."/>
            <person name="Mays A.D."/>
            <person name="Dew I."/>
            <person name="Dietz S.M."/>
            <person name="Dodson K."/>
            <person name="Doup L.E."/>
            <person name="Downes M."/>
            <person name="Dugan-Rocha S."/>
            <person name="Dunkov B.C."/>
            <person name="Dunn P."/>
            <person name="Durbin K.J."/>
            <person name="Evangelista C.C."/>
            <person name="Ferraz C."/>
            <person name="Ferriera S."/>
            <person name="Fleischmann W."/>
            <person name="Fosler C."/>
            <person name="Gabrielian A.E."/>
            <person name="Garg N.S."/>
            <person name="Gelbart W.M."/>
            <person name="Glasser K."/>
            <person name="Glodek A."/>
            <person name="Gong F."/>
            <person name="Gorrell J.H."/>
            <person name="Gu Z."/>
            <person name="Guan P."/>
            <person name="Harris M."/>
            <person name="Harris N.L."/>
            <person name="Harvey D.A."/>
            <person name="Heiman T.J."/>
            <person name="Hernandez J.R."/>
            <person name="Houck J."/>
            <person name="Hostin D."/>
            <person name="Houston K.A."/>
            <person name="Howland T.J."/>
            <person name="Wei M.-H."/>
            <person name="Ibegwam C."/>
            <person name="Jalali M."/>
            <person name="Kalush F."/>
            <person name="Karpen G.H."/>
            <person name="Ke Z."/>
            <person name="Kennison J.A."/>
            <person name="Ketchum K.A."/>
            <person name="Kimmel B.E."/>
            <person name="Kodira C.D."/>
            <person name="Kraft C.L."/>
            <person name="Kravitz S."/>
            <person name="Kulp D."/>
            <person name="Lai Z."/>
            <person name="Lasko P."/>
            <person name="Lei Y."/>
            <person name="Levitsky A.A."/>
            <person name="Li J.H."/>
            <person name="Li Z."/>
            <person name="Liang Y."/>
            <person name="Lin X."/>
            <person name="Liu X."/>
            <person name="Mattei B."/>
            <person name="McIntosh T.C."/>
            <person name="McLeod M.P."/>
            <person name="McPherson D."/>
            <person name="Merkulov G."/>
            <person name="Milshina N.V."/>
            <person name="Mobarry C."/>
            <person name="Morris J."/>
            <person name="Moshrefi A."/>
            <person name="Mount S.M."/>
            <person name="Moy M."/>
            <person name="Murphy B."/>
            <person name="Murphy L."/>
            <person name="Muzny D.M."/>
            <person name="Nelson D.L."/>
            <person name="Nelson D.R."/>
            <person name="Nelson K.A."/>
            <person name="Nixon K."/>
            <person name="Nusskern D.R."/>
            <person name="Pacleb J.M."/>
            <person name="Palazzolo M."/>
            <person name="Pittman G.S."/>
            <person name="Pan S."/>
            <person name="Pollard J."/>
            <person name="Puri V."/>
            <person name="Reese M.G."/>
            <person name="Reinert K."/>
            <person name="Remington K."/>
            <person name="Saunders R.D.C."/>
            <person name="Scheeler F."/>
            <person name="Shen H."/>
            <person name="Shue B.C."/>
            <person name="Siden-Kiamos I."/>
            <person name="Simpson M."/>
            <person name="Skupski M.P."/>
            <person name="Smith T.J."/>
            <person name="Spier E."/>
            <person name="Spradling A.C."/>
            <person name="Stapleton M."/>
            <person name="Strong R."/>
            <person name="Sun E."/>
            <person name="Svirskas R."/>
            <person name="Tector C."/>
            <person name="Turner R."/>
            <person name="Venter E."/>
            <person name="Wang A.H."/>
            <person name="Wang X."/>
            <person name="Wang Z.-Y."/>
            <person name="Wassarman D.A."/>
            <person name="Weinstock G.M."/>
            <person name="Weissenbach J."/>
            <person name="Williams S.M."/>
            <person name="Woodage T."/>
            <person name="Worley K.C."/>
            <person name="Wu D."/>
            <person name="Yang S."/>
            <person name="Yao Q.A."/>
            <person name="Ye J."/>
            <person name="Yeh R.-F."/>
            <person name="Zaveri J.S."/>
            <person name="Zhan M."/>
            <person name="Zhang G."/>
            <person name="Zhao Q."/>
            <person name="Zheng L."/>
            <person name="Zheng X.H."/>
            <person name="Zhong F.N."/>
            <person name="Zhong W."/>
            <person name="Zhou X."/>
            <person name="Zhu S.C."/>
            <person name="Zhu X."/>
            <person name="Smith H.O."/>
            <person name="Gibbs R.A."/>
            <person name="Myers E.W."/>
            <person name="Rubin G.M."/>
            <person name="Venter J.C."/>
        </authorList>
    </citation>
    <scope>NUCLEOTIDE SEQUENCE [LARGE SCALE GENOMIC DNA]</scope>
    <source>
        <strain>Berkeley</strain>
    </source>
</reference>
<reference key="2">
    <citation type="journal article" date="2002" name="Genome Biol.">
        <title>Annotation of the Drosophila melanogaster euchromatic genome: a systematic review.</title>
        <authorList>
            <person name="Misra S."/>
            <person name="Crosby M.A."/>
            <person name="Mungall C.J."/>
            <person name="Matthews B.B."/>
            <person name="Campbell K.S."/>
            <person name="Hradecky P."/>
            <person name="Huang Y."/>
            <person name="Kaminker J.S."/>
            <person name="Millburn G.H."/>
            <person name="Prochnik S.E."/>
            <person name="Smith C.D."/>
            <person name="Tupy J.L."/>
            <person name="Whitfield E.J."/>
            <person name="Bayraktaroglu L."/>
            <person name="Berman B.P."/>
            <person name="Bettencourt B.R."/>
            <person name="Celniker S.E."/>
            <person name="de Grey A.D.N.J."/>
            <person name="Drysdale R.A."/>
            <person name="Harris N.L."/>
            <person name="Richter J."/>
            <person name="Russo S."/>
            <person name="Schroeder A.J."/>
            <person name="Shu S.Q."/>
            <person name="Stapleton M."/>
            <person name="Yamada C."/>
            <person name="Ashburner M."/>
            <person name="Gelbart W.M."/>
            <person name="Rubin G.M."/>
            <person name="Lewis S.E."/>
        </authorList>
    </citation>
    <scope>GENOME REANNOTATION</scope>
    <source>
        <strain>Berkeley</strain>
    </source>
</reference>
<reference key="3">
    <citation type="submission" date="2003-01" db="EMBL/GenBank/DDBJ databases">
        <authorList>
            <person name="Stapleton M."/>
            <person name="Brokstein P."/>
            <person name="Hong L."/>
            <person name="Agbayani A."/>
            <person name="Carlson J.W."/>
            <person name="Champe M."/>
            <person name="Chavez C."/>
            <person name="Dorsett V."/>
            <person name="Dresnek D."/>
            <person name="Farfan D."/>
            <person name="Frise E."/>
            <person name="George R.A."/>
            <person name="Gonzalez M."/>
            <person name="Guarin H."/>
            <person name="Kronmiller B."/>
            <person name="Li P.W."/>
            <person name="Liao G."/>
            <person name="Miranda A."/>
            <person name="Mungall C.J."/>
            <person name="Nunoo J."/>
            <person name="Pacleb J.M."/>
            <person name="Paragas V."/>
            <person name="Park S."/>
            <person name="Patel S."/>
            <person name="Phouanenavong S."/>
            <person name="Wan K.H."/>
            <person name="Yu C."/>
            <person name="Lewis S.E."/>
            <person name="Rubin G.M."/>
            <person name="Celniker S.E."/>
        </authorList>
    </citation>
    <scope>NUCLEOTIDE SEQUENCE [LARGE SCALE MRNA]</scope>
    <source>
        <strain>Berkeley</strain>
        <tissue>Head</tissue>
    </source>
</reference>
<reference key="4">
    <citation type="journal article" date="2002" name="Genome Biol.">
        <title>A Drosophila full-length cDNA resource.</title>
        <authorList>
            <person name="Stapleton M."/>
            <person name="Carlson J.W."/>
            <person name="Brokstein P."/>
            <person name="Yu C."/>
            <person name="Champe M."/>
            <person name="George R.A."/>
            <person name="Guarin H."/>
            <person name="Kronmiller B."/>
            <person name="Pacleb J.M."/>
            <person name="Park S."/>
            <person name="Wan K.H."/>
            <person name="Rubin G.M."/>
            <person name="Celniker S.E."/>
        </authorList>
    </citation>
    <scope>NUCLEOTIDE SEQUENCE [LARGE SCALE MRNA] OF 472-1430</scope>
    <source>
        <strain>Berkeley</strain>
        <tissue>Embryo</tissue>
    </source>
</reference>
<reference key="5">
    <citation type="journal article" date="2008" name="J. Proteome Res.">
        <title>Phosphoproteome analysis of Drosophila melanogaster embryos.</title>
        <authorList>
            <person name="Zhai B."/>
            <person name="Villen J."/>
            <person name="Beausoleil S.A."/>
            <person name="Mintseris J."/>
            <person name="Gygi S.P."/>
        </authorList>
    </citation>
    <scope>PHOSPHORYLATION [LARGE SCALE ANALYSIS] AT SER-865; SER-868; SER-1345; SER-1348; SER-1390 AND SER-1392</scope>
    <scope>IDENTIFICATION BY MASS SPECTROMETRY</scope>
    <source>
        <tissue>Embryo</tissue>
    </source>
</reference>
<reference key="6">
    <citation type="journal article" date="2006" name="Nature">
        <title>Functional genomics reveals genes involved in protein secretion and Golgi organization.</title>
        <authorList>
            <person name="Bard F."/>
            <person name="Casano L."/>
            <person name="Mallabiabarrena A."/>
            <person name="Wallace E."/>
            <person name="Saito K."/>
            <person name="Kitayama H."/>
            <person name="Guizzunti G."/>
            <person name="Hu Y."/>
            <person name="Wendler F."/>
            <person name="Dasgupta R."/>
            <person name="Perrimon N."/>
            <person name="Malhotra V."/>
        </authorList>
    </citation>
    <scope>FUNCTION</scope>
    <scope>SUBCELLULAR LOCATION</scope>
</reference>
<reference key="7">
    <citation type="journal article" date="2013" name="Dev. Cell">
        <title>A Rab10-dependent mechanism for polarized basement membrane secretion during organ morphogenesis.</title>
        <authorList>
            <person name="Lerner D.W."/>
            <person name="McCoy D."/>
            <person name="Isabella A.J."/>
            <person name="Mahowald A.P."/>
            <person name="Gerlach G.F."/>
            <person name="Chaudhry T.A."/>
            <person name="Horne-Badovinac S."/>
        </authorList>
    </citation>
    <scope>FUNCTION</scope>
    <scope>SUBCELLULAR LOCATION</scope>
    <scope>DISRUPTION PHENOTYPE</scope>
</reference>
<protein>
    <recommendedName>
        <fullName evidence="7">Transport and Golgi organization protein 1</fullName>
    </recommendedName>
</protein>
<name>TGO1_DROME</name>
<comment type="function">
    <text evidence="4 6">Required for protein secretion (PubMed:16452979, PubMed:23369713). May participate in cargo loading by binding to COPII coat subunits and guiding SH3-bound proteins into a growing carrier (PubMed:16452979). At basal transitional ER sites in follicle epithelial cells, mediates the exit of basal membrane protein such as vkg, LanB1 and Trol, from the endoplasmic reticulum (ER) to basal Golgi clusters (PubMed:23369713).</text>
</comment>
<comment type="subcellular location">
    <subcellularLocation>
        <location evidence="4 6">Golgi apparatus membrane</location>
        <topology evidence="4">Single-pass type I membrane protein</topology>
    </subcellularLocation>
    <subcellularLocation>
        <location evidence="6">Golgi apparatus</location>
        <location evidence="6">trans-Golgi network</location>
    </subcellularLocation>
</comment>
<comment type="disruption phenotype">
    <text evidence="6">RNAi-mediated knockdown results in basal membrane proteins such as vkg, LanB1 and Trol accumulating in the basal ER.</text>
</comment>
<comment type="similarity">
    <text evidence="8">Belongs to the MIA/OTOR family. Tango1 subfamily.</text>
</comment>
<comment type="sequence caution" evidence="8">
    <conflict type="erroneous initiation">
        <sequence resource="EMBL-CDS" id="AAL68225"/>
    </conflict>
    <text>Truncated N-terminus.</text>
</comment>
<comment type="sequence caution" evidence="8">
    <conflict type="miscellaneous discrepancy">
        <sequence resource="EMBL-CDS" id="AAL68225"/>
    </conflict>
    <text>Deletion of 12 residues at position 1268 causing a frameshift.</text>
</comment>
<comment type="sequence caution" evidence="8">
    <conflict type="miscellaneous discrepancy">
        <sequence resource="EMBL-CDS" id="AAL68225"/>
    </conflict>
    <text>Deletion of 172 residues at position 924.</text>
</comment>
<organism>
    <name type="scientific">Drosophila melanogaster</name>
    <name type="common">Fruit fly</name>
    <dbReference type="NCBI Taxonomy" id="7227"/>
    <lineage>
        <taxon>Eukaryota</taxon>
        <taxon>Metazoa</taxon>
        <taxon>Ecdysozoa</taxon>
        <taxon>Arthropoda</taxon>
        <taxon>Hexapoda</taxon>
        <taxon>Insecta</taxon>
        <taxon>Pterygota</taxon>
        <taxon>Neoptera</taxon>
        <taxon>Endopterygota</taxon>
        <taxon>Diptera</taxon>
        <taxon>Brachycera</taxon>
        <taxon>Muscomorpha</taxon>
        <taxon>Ephydroidea</taxon>
        <taxon>Drosophilidae</taxon>
        <taxon>Drosophila</taxon>
        <taxon>Sophophora</taxon>
    </lineage>
</organism>
<accession>Q9VMA7</accession>
<accession>Q8SY42</accession>
<accession>Q9VMA8</accession>
<gene>
    <name evidence="9" type="primary">Tango1</name>
    <name evidence="9" type="ORF">CG11098</name>
</gene>